<name>RIMP_LACE2</name>
<organism>
    <name type="scientific">Lachnospira eligens (strain ATCC 27750 / DSM 3376 / VPI C15-48 / C15-B4)</name>
    <name type="common">Eubacterium eligens</name>
    <dbReference type="NCBI Taxonomy" id="515620"/>
    <lineage>
        <taxon>Bacteria</taxon>
        <taxon>Bacillati</taxon>
        <taxon>Bacillota</taxon>
        <taxon>Clostridia</taxon>
        <taxon>Lachnospirales</taxon>
        <taxon>Lachnospiraceae</taxon>
        <taxon>Lachnospira</taxon>
    </lineage>
</organism>
<accession>C4Z5N3</accession>
<feature type="chain" id="PRO_1000213490" description="Ribosome maturation factor RimP">
    <location>
        <begin position="1"/>
        <end position="156"/>
    </location>
</feature>
<gene>
    <name evidence="1" type="primary">rimP</name>
    <name type="ordered locus">EUBELI_00890</name>
</gene>
<keyword id="KW-0963">Cytoplasm</keyword>
<keyword id="KW-1185">Reference proteome</keyword>
<keyword id="KW-0690">Ribosome biogenesis</keyword>
<reference key="1">
    <citation type="journal article" date="2009" name="Proc. Natl. Acad. Sci. U.S.A.">
        <title>Characterizing a model human gut microbiota composed of members of its two dominant bacterial phyla.</title>
        <authorList>
            <person name="Mahowald M.A."/>
            <person name="Rey F.E."/>
            <person name="Seedorf H."/>
            <person name="Turnbaugh P.J."/>
            <person name="Fulton R.S."/>
            <person name="Wollam A."/>
            <person name="Shah N."/>
            <person name="Wang C."/>
            <person name="Magrini V."/>
            <person name="Wilson R.K."/>
            <person name="Cantarel B.L."/>
            <person name="Coutinho P.M."/>
            <person name="Henrissat B."/>
            <person name="Crock L.W."/>
            <person name="Russell A."/>
            <person name="Verberkmoes N.C."/>
            <person name="Hettich R.L."/>
            <person name="Gordon J.I."/>
        </authorList>
    </citation>
    <scope>NUCLEOTIDE SEQUENCE [LARGE SCALE GENOMIC DNA]</scope>
    <source>
        <strain>ATCC 27750 / DSM 3376 / VPI C15-48 / C15-B4</strain>
    </source>
</reference>
<protein>
    <recommendedName>
        <fullName evidence="1">Ribosome maturation factor RimP</fullName>
    </recommendedName>
</protein>
<comment type="function">
    <text evidence="1">Required for maturation of 30S ribosomal subunits.</text>
</comment>
<comment type="subcellular location">
    <subcellularLocation>
        <location evidence="1">Cytoplasm</location>
    </subcellularLocation>
</comment>
<comment type="similarity">
    <text evidence="1">Belongs to the RimP family.</text>
</comment>
<evidence type="ECO:0000255" key="1">
    <source>
        <dbReference type="HAMAP-Rule" id="MF_01077"/>
    </source>
</evidence>
<proteinExistence type="inferred from homology"/>
<sequence>MGKRESYEAKTTELIQPVVEANGVELFDVDYVKEGSDWYLRVYIDKEGGVTIDDCQNVSRAFNEILDRENYIDDQYIFEVSSPGLTRPLKKEKDYEKSIGRMIEIKLFSPVDKSKEYSGVLKEYDKDTVTISIDDVTKTFDRSNLAMIRWAFVDEV</sequence>
<dbReference type="EMBL" id="CP001104">
    <property type="protein sequence ID" value="ACR71892.1"/>
    <property type="molecule type" value="Genomic_DNA"/>
</dbReference>
<dbReference type="RefSeq" id="WP_012739128.1">
    <property type="nucleotide sequence ID" value="NC_012778.1"/>
</dbReference>
<dbReference type="SMR" id="C4Z5N3"/>
<dbReference type="STRING" id="515620.EUBELI_00890"/>
<dbReference type="GeneID" id="41355625"/>
<dbReference type="KEGG" id="eel:EUBELI_00890"/>
<dbReference type="eggNOG" id="COG0779">
    <property type="taxonomic scope" value="Bacteria"/>
</dbReference>
<dbReference type="HOGENOM" id="CLU_070525_2_0_9"/>
<dbReference type="Proteomes" id="UP000001476">
    <property type="component" value="Chromosome"/>
</dbReference>
<dbReference type="GO" id="GO:0005829">
    <property type="term" value="C:cytosol"/>
    <property type="evidence" value="ECO:0007669"/>
    <property type="project" value="TreeGrafter"/>
</dbReference>
<dbReference type="GO" id="GO:0000028">
    <property type="term" value="P:ribosomal small subunit assembly"/>
    <property type="evidence" value="ECO:0007669"/>
    <property type="project" value="TreeGrafter"/>
</dbReference>
<dbReference type="GO" id="GO:0006412">
    <property type="term" value="P:translation"/>
    <property type="evidence" value="ECO:0007669"/>
    <property type="project" value="TreeGrafter"/>
</dbReference>
<dbReference type="CDD" id="cd01734">
    <property type="entry name" value="YlxS_C"/>
    <property type="match status" value="1"/>
</dbReference>
<dbReference type="FunFam" id="3.30.300.70:FF:000001">
    <property type="entry name" value="Ribosome maturation factor RimP"/>
    <property type="match status" value="1"/>
</dbReference>
<dbReference type="Gene3D" id="2.30.30.180">
    <property type="entry name" value="Ribosome maturation factor RimP, C-terminal domain"/>
    <property type="match status" value="1"/>
</dbReference>
<dbReference type="Gene3D" id="3.30.300.70">
    <property type="entry name" value="RimP-like superfamily, N-terminal"/>
    <property type="match status" value="1"/>
</dbReference>
<dbReference type="HAMAP" id="MF_01077">
    <property type="entry name" value="RimP"/>
    <property type="match status" value="1"/>
</dbReference>
<dbReference type="InterPro" id="IPR003728">
    <property type="entry name" value="Ribosome_maturation_RimP"/>
</dbReference>
<dbReference type="InterPro" id="IPR028998">
    <property type="entry name" value="RimP_C"/>
</dbReference>
<dbReference type="InterPro" id="IPR036847">
    <property type="entry name" value="RimP_C_sf"/>
</dbReference>
<dbReference type="InterPro" id="IPR028989">
    <property type="entry name" value="RimP_N"/>
</dbReference>
<dbReference type="InterPro" id="IPR035956">
    <property type="entry name" value="RimP_N_sf"/>
</dbReference>
<dbReference type="PANTHER" id="PTHR33867">
    <property type="entry name" value="RIBOSOME MATURATION FACTOR RIMP"/>
    <property type="match status" value="1"/>
</dbReference>
<dbReference type="PANTHER" id="PTHR33867:SF1">
    <property type="entry name" value="RIBOSOME MATURATION FACTOR RIMP"/>
    <property type="match status" value="1"/>
</dbReference>
<dbReference type="Pfam" id="PF17384">
    <property type="entry name" value="DUF150_C"/>
    <property type="match status" value="1"/>
</dbReference>
<dbReference type="Pfam" id="PF02576">
    <property type="entry name" value="RimP_N"/>
    <property type="match status" value="1"/>
</dbReference>
<dbReference type="SUPFAM" id="SSF74942">
    <property type="entry name" value="YhbC-like, C-terminal domain"/>
    <property type="match status" value="1"/>
</dbReference>
<dbReference type="SUPFAM" id="SSF75420">
    <property type="entry name" value="YhbC-like, N-terminal domain"/>
    <property type="match status" value="1"/>
</dbReference>